<dbReference type="EMBL" id="Z49809">
    <property type="protein sequence ID" value="CAA89934.1"/>
    <property type="molecule type" value="Genomic_DNA"/>
</dbReference>
<dbReference type="EMBL" id="Z49939">
    <property type="protein sequence ID" value="CAA90190.1"/>
    <property type="molecule type" value="Genomic_DNA"/>
</dbReference>
<dbReference type="EMBL" id="BK006946">
    <property type="protein sequence ID" value="DAA10118.1"/>
    <property type="molecule type" value="Genomic_DNA"/>
</dbReference>
<dbReference type="PIR" id="S55101">
    <property type="entry name" value="S55101"/>
</dbReference>
<dbReference type="RefSeq" id="NP_013946.1">
    <property type="nucleotide sequence ID" value="NM_001182726.1"/>
</dbReference>
<dbReference type="PDB" id="6QSZ">
    <property type="method" value="X-ray"/>
    <property type="resolution" value="2.50 A"/>
    <property type="chains" value="B/D/F/H/J/L/N/P=1443-1458"/>
</dbReference>
<dbReference type="PDBsum" id="6QSZ"/>
<dbReference type="SMR" id="Q03661"/>
<dbReference type="BioGRID" id="35397">
    <property type="interactions" value="232"/>
</dbReference>
<dbReference type="DIP" id="DIP-7971N"/>
<dbReference type="FunCoup" id="Q03661">
    <property type="interactions" value="154"/>
</dbReference>
<dbReference type="IntAct" id="Q03661">
    <property type="interactions" value="27"/>
</dbReference>
<dbReference type="MINT" id="Q03661"/>
<dbReference type="STRING" id="4932.YMR219W"/>
<dbReference type="iPTMnet" id="Q03661"/>
<dbReference type="PaxDb" id="4932-YMR219W"/>
<dbReference type="PeptideAtlas" id="Q03661"/>
<dbReference type="EnsemblFungi" id="YMR219W_mRNA">
    <property type="protein sequence ID" value="YMR219W"/>
    <property type="gene ID" value="YMR219W"/>
</dbReference>
<dbReference type="GeneID" id="855259"/>
<dbReference type="KEGG" id="sce:YMR219W"/>
<dbReference type="AGR" id="SGD:S000004832"/>
<dbReference type="SGD" id="S000004832">
    <property type="gene designation" value="ESC1"/>
</dbReference>
<dbReference type="VEuPathDB" id="FungiDB:YMR219W"/>
<dbReference type="eggNOG" id="ENOG502SDFK">
    <property type="taxonomic scope" value="Eukaryota"/>
</dbReference>
<dbReference type="HOGENOM" id="CLU_003498_0_0_1"/>
<dbReference type="InParanoid" id="Q03661"/>
<dbReference type="OMA" id="EDVIDWI"/>
<dbReference type="OrthoDB" id="4070768at2759"/>
<dbReference type="BioCyc" id="YEAST:G3O-32901-MONOMER"/>
<dbReference type="BioGRID-ORCS" id="855259">
    <property type="hits" value="0 hits in 10 CRISPR screens"/>
</dbReference>
<dbReference type="PRO" id="PR:Q03661"/>
<dbReference type="Proteomes" id="UP000002311">
    <property type="component" value="Chromosome XIII"/>
</dbReference>
<dbReference type="RNAct" id="Q03661">
    <property type="molecule type" value="protein"/>
</dbReference>
<dbReference type="GO" id="GO:0000781">
    <property type="term" value="C:chromosome, telomeric region"/>
    <property type="evidence" value="ECO:0000314"/>
    <property type="project" value="SGD"/>
</dbReference>
<dbReference type="GO" id="GO:0034399">
    <property type="term" value="C:nuclear periphery"/>
    <property type="evidence" value="ECO:0000314"/>
    <property type="project" value="SGD"/>
</dbReference>
<dbReference type="GO" id="GO:0031509">
    <property type="term" value="P:subtelomeric heterochromatin formation"/>
    <property type="evidence" value="ECO:0000315"/>
    <property type="project" value="SGD"/>
</dbReference>
<dbReference type="GO" id="GO:0034398">
    <property type="term" value="P:telomere tethering at nuclear periphery"/>
    <property type="evidence" value="ECO:0000315"/>
    <property type="project" value="SGD"/>
</dbReference>
<dbReference type="InterPro" id="IPR001611">
    <property type="entry name" value="Leu-rich_rpt"/>
</dbReference>
<dbReference type="PROSITE" id="PS51450">
    <property type="entry name" value="LRR"/>
    <property type="match status" value="1"/>
</dbReference>
<keyword id="KW-0002">3D-structure</keyword>
<keyword id="KW-0539">Nucleus</keyword>
<keyword id="KW-0597">Phosphoprotein</keyword>
<keyword id="KW-1185">Reference proteome</keyword>
<keyword id="KW-0804">Transcription</keyword>
<keyword id="KW-0805">Transcription regulation</keyword>
<accession>Q03661</accession>
<accession>D6W044</accession>
<accession>Q04988</accession>
<feature type="chain" id="PRO_0000203333" description="Silent chromatin protein ESC1">
    <location>
        <begin position="1"/>
        <end position="1658"/>
    </location>
</feature>
<feature type="region of interest" description="Disordered" evidence="1">
    <location>
        <begin position="36"/>
        <end position="76"/>
    </location>
</feature>
<feature type="region of interest" description="Disordered" evidence="1">
    <location>
        <begin position="156"/>
        <end position="499"/>
    </location>
</feature>
<feature type="region of interest" description="Disordered" evidence="1">
    <location>
        <begin position="550"/>
        <end position="584"/>
    </location>
</feature>
<feature type="region of interest" description="Disordered" evidence="1">
    <location>
        <begin position="589"/>
        <end position="608"/>
    </location>
</feature>
<feature type="region of interest" description="Disordered" evidence="1">
    <location>
        <begin position="770"/>
        <end position="819"/>
    </location>
</feature>
<feature type="region of interest" description="Disordered" evidence="1">
    <location>
        <begin position="863"/>
        <end position="964"/>
    </location>
</feature>
<feature type="region of interest" description="Disordered" evidence="1">
    <location>
        <begin position="1082"/>
        <end position="1115"/>
    </location>
</feature>
<feature type="region of interest" description="Disordered" evidence="1">
    <location>
        <begin position="1197"/>
        <end position="1216"/>
    </location>
</feature>
<feature type="region of interest" description="Disordered" evidence="1">
    <location>
        <begin position="1261"/>
        <end position="1315"/>
    </location>
</feature>
<feature type="region of interest" description="Disordered" evidence="1">
    <location>
        <begin position="1334"/>
        <end position="1482"/>
    </location>
</feature>
<feature type="region of interest" description="Disordered" evidence="1">
    <location>
        <begin position="1503"/>
        <end position="1658"/>
    </location>
</feature>
<feature type="compositionally biased region" description="Basic and acidic residues" evidence="1">
    <location>
        <begin position="36"/>
        <end position="54"/>
    </location>
</feature>
<feature type="compositionally biased region" description="Acidic residues" evidence="1">
    <location>
        <begin position="205"/>
        <end position="214"/>
    </location>
</feature>
<feature type="compositionally biased region" description="Acidic residues" evidence="1">
    <location>
        <begin position="245"/>
        <end position="254"/>
    </location>
</feature>
<feature type="compositionally biased region" description="Polar residues" evidence="1">
    <location>
        <begin position="262"/>
        <end position="286"/>
    </location>
</feature>
<feature type="compositionally biased region" description="Acidic residues" evidence="1">
    <location>
        <begin position="289"/>
        <end position="305"/>
    </location>
</feature>
<feature type="compositionally biased region" description="Basic and acidic residues" evidence="1">
    <location>
        <begin position="335"/>
        <end position="352"/>
    </location>
</feature>
<feature type="compositionally biased region" description="Acidic residues" evidence="1">
    <location>
        <begin position="365"/>
        <end position="375"/>
    </location>
</feature>
<feature type="compositionally biased region" description="Basic and acidic residues" evidence="1">
    <location>
        <begin position="386"/>
        <end position="397"/>
    </location>
</feature>
<feature type="compositionally biased region" description="Acidic residues" evidence="1">
    <location>
        <begin position="398"/>
        <end position="407"/>
    </location>
</feature>
<feature type="compositionally biased region" description="Low complexity" evidence="1">
    <location>
        <begin position="408"/>
        <end position="417"/>
    </location>
</feature>
<feature type="compositionally biased region" description="Basic and acidic residues" evidence="1">
    <location>
        <begin position="425"/>
        <end position="435"/>
    </location>
</feature>
<feature type="compositionally biased region" description="Basic and acidic residues" evidence="1">
    <location>
        <begin position="442"/>
        <end position="461"/>
    </location>
</feature>
<feature type="compositionally biased region" description="Basic and acidic residues" evidence="1">
    <location>
        <begin position="471"/>
        <end position="482"/>
    </location>
</feature>
<feature type="compositionally biased region" description="Polar residues" evidence="1">
    <location>
        <begin position="568"/>
        <end position="577"/>
    </location>
</feature>
<feature type="compositionally biased region" description="Polar residues" evidence="1">
    <location>
        <begin position="800"/>
        <end position="812"/>
    </location>
</feature>
<feature type="compositionally biased region" description="Basic and acidic residues" evidence="1">
    <location>
        <begin position="869"/>
        <end position="878"/>
    </location>
</feature>
<feature type="compositionally biased region" description="Polar residues" evidence="1">
    <location>
        <begin position="879"/>
        <end position="905"/>
    </location>
</feature>
<feature type="compositionally biased region" description="Basic and acidic residues" evidence="1">
    <location>
        <begin position="918"/>
        <end position="931"/>
    </location>
</feature>
<feature type="compositionally biased region" description="Acidic residues" evidence="1">
    <location>
        <begin position="932"/>
        <end position="956"/>
    </location>
</feature>
<feature type="compositionally biased region" description="Polar residues" evidence="1">
    <location>
        <begin position="1082"/>
        <end position="1096"/>
    </location>
</feature>
<feature type="compositionally biased region" description="Basic and acidic residues" evidence="1">
    <location>
        <begin position="1097"/>
        <end position="1115"/>
    </location>
</feature>
<feature type="compositionally biased region" description="Polar residues" evidence="1">
    <location>
        <begin position="1197"/>
        <end position="1207"/>
    </location>
</feature>
<feature type="compositionally biased region" description="Basic and acidic residues" evidence="1">
    <location>
        <begin position="1261"/>
        <end position="1272"/>
    </location>
</feature>
<feature type="compositionally biased region" description="Basic and acidic residues" evidence="1">
    <location>
        <begin position="1335"/>
        <end position="1366"/>
    </location>
</feature>
<feature type="compositionally biased region" description="Acidic residues" evidence="1">
    <location>
        <begin position="1407"/>
        <end position="1423"/>
    </location>
</feature>
<feature type="compositionally biased region" description="Polar residues" evidence="1">
    <location>
        <begin position="1463"/>
        <end position="1479"/>
    </location>
</feature>
<feature type="compositionally biased region" description="Basic and acidic residues" evidence="1">
    <location>
        <begin position="1507"/>
        <end position="1537"/>
    </location>
</feature>
<feature type="compositionally biased region" description="Basic and acidic residues" evidence="1">
    <location>
        <begin position="1550"/>
        <end position="1564"/>
    </location>
</feature>
<feature type="compositionally biased region" description="Basic and acidic residues" evidence="1">
    <location>
        <begin position="1575"/>
        <end position="1591"/>
    </location>
</feature>
<feature type="compositionally biased region" description="Basic residues" evidence="1">
    <location>
        <begin position="1607"/>
        <end position="1626"/>
    </location>
</feature>
<feature type="compositionally biased region" description="Polar residues" evidence="1">
    <location>
        <begin position="1648"/>
        <end position="1658"/>
    </location>
</feature>
<feature type="modified residue" description="Phosphothreonine" evidence="7">
    <location>
        <position position="500"/>
    </location>
</feature>
<feature type="modified residue" description="Phosphoserine" evidence="6 7 8">
    <location>
        <position position="532"/>
    </location>
</feature>
<feature type="modified residue" description="Phosphoserine" evidence="7 8">
    <location>
        <position position="579"/>
    </location>
</feature>
<feature type="modified residue" description="Phosphoserine" evidence="8">
    <location>
        <position position="583"/>
    </location>
</feature>
<feature type="modified residue" description="Phosphoserine" evidence="8">
    <location>
        <position position="608"/>
    </location>
</feature>
<feature type="modified residue" description="Phosphoserine" evidence="7">
    <location>
        <position position="662"/>
    </location>
</feature>
<feature type="modified residue" description="Phosphoserine" evidence="7 8">
    <location>
        <position position="865"/>
    </location>
</feature>
<feature type="modified residue" description="Phosphoserine" evidence="7 8">
    <location>
        <position position="866"/>
    </location>
</feature>
<feature type="modified residue" description="Phosphoserine" evidence="7 8">
    <location>
        <position position="888"/>
    </location>
</feature>
<feature type="modified residue" description="Phosphoserine" evidence="6 8">
    <location>
        <position position="911"/>
    </location>
</feature>
<feature type="modified residue" description="Phosphoserine" evidence="8">
    <location>
        <position position="937"/>
    </location>
</feature>
<feature type="modified residue" description="Phosphoserine" evidence="8">
    <location>
        <position position="1092"/>
    </location>
</feature>
<feature type="modified residue" description="Phosphoserine" evidence="8">
    <location>
        <position position="1096"/>
    </location>
</feature>
<feature type="modified residue" description="Phosphoserine" evidence="8">
    <location>
        <position position="1098"/>
    </location>
</feature>
<feature type="modified residue" description="Phosphoserine" evidence="7">
    <location>
        <position position="1166"/>
    </location>
</feature>
<feature type="modified residue" description="Phosphoserine" evidence="8">
    <location>
        <position position="1176"/>
    </location>
</feature>
<feature type="modified residue" description="Phosphoserine" evidence="8">
    <location>
        <position position="1178"/>
    </location>
</feature>
<feature type="modified residue" description="Phosphoserine" evidence="8">
    <location>
        <position position="1214"/>
    </location>
</feature>
<feature type="modified residue" description="Phosphoserine" evidence="7 8">
    <location>
        <position position="1254"/>
    </location>
</feature>
<feature type="modified residue" description="Phosphoserine" evidence="8">
    <location>
        <position position="1290"/>
    </location>
</feature>
<feature type="modified residue" description="Phosphoserine" evidence="6 7 8">
    <location>
        <position position="1326"/>
    </location>
</feature>
<feature type="modified residue" description="Phosphoserine" evidence="8">
    <location>
        <position position="1332"/>
    </location>
</feature>
<feature type="modified residue" description="Phosphoserine" evidence="8">
    <location>
        <position position="1403"/>
    </location>
</feature>
<feature type="modified residue" description="Phosphoserine" evidence="8">
    <location>
        <position position="1409"/>
    </location>
</feature>
<feature type="modified residue" description="Phosphoserine" evidence="8">
    <location>
        <position position="1450"/>
    </location>
</feature>
<feature type="modified residue" description="Phosphoserine" evidence="8">
    <location>
        <position position="1454"/>
    </location>
</feature>
<feature type="modified residue" description="Phosphoserine" evidence="8">
    <location>
        <position position="1539"/>
    </location>
</feature>
<feature type="modified residue" description="Phosphoserine" evidence="8">
    <location>
        <position position="1590"/>
    </location>
</feature>
<feature type="modified residue" description="Phosphoserine" evidence="8">
    <location>
        <position position="1591"/>
    </location>
</feature>
<protein>
    <recommendedName>
        <fullName>Silent chromatin protein ESC1</fullName>
    </recommendedName>
    <alternativeName>
        <fullName>Establishes silent chromatin protein 1</fullName>
    </alternativeName>
</protein>
<organism>
    <name type="scientific">Saccharomyces cerevisiae (strain ATCC 204508 / S288c)</name>
    <name type="common">Baker's yeast</name>
    <dbReference type="NCBI Taxonomy" id="559292"/>
    <lineage>
        <taxon>Eukaryota</taxon>
        <taxon>Fungi</taxon>
        <taxon>Dikarya</taxon>
        <taxon>Ascomycota</taxon>
        <taxon>Saccharomycotina</taxon>
        <taxon>Saccharomycetes</taxon>
        <taxon>Saccharomycetales</taxon>
        <taxon>Saccharomycetaceae</taxon>
        <taxon>Saccharomyces</taxon>
    </lineage>
</organism>
<comment type="function">
    <text evidence="2 4 5">Involved in the clustering of telomeres at the nuclear periphery, forming discrete subcompartments that accumulate a complex of histone-binding silencing factors like SIR4. Required for SIR4-mediated anchoring and partitioning of plasmids.</text>
</comment>
<comment type="subunit">
    <text evidence="2 4">Interacts with SIR4.</text>
</comment>
<comment type="subcellular location">
    <subcellularLocation>
        <location evidence="2 3 4">Nucleus</location>
    </subcellularLocation>
    <text>Concentrated at the nuclear periphery.</text>
</comment>
<proteinExistence type="evidence at protein level"/>
<reference key="1">
    <citation type="journal article" date="1997" name="Nature">
        <title>The nucleotide sequence of Saccharomyces cerevisiae chromosome XIII.</title>
        <authorList>
            <person name="Bowman S."/>
            <person name="Churcher C.M."/>
            <person name="Badcock K."/>
            <person name="Brown D."/>
            <person name="Chillingworth T."/>
            <person name="Connor R."/>
            <person name="Dedman K."/>
            <person name="Devlin K."/>
            <person name="Gentles S."/>
            <person name="Hamlin N."/>
            <person name="Hunt S."/>
            <person name="Jagels K."/>
            <person name="Lye G."/>
            <person name="Moule S."/>
            <person name="Odell C."/>
            <person name="Pearson D."/>
            <person name="Rajandream M.A."/>
            <person name="Rice P."/>
            <person name="Skelton J."/>
            <person name="Walsh S.V."/>
            <person name="Whitehead S."/>
            <person name="Barrell B.G."/>
        </authorList>
    </citation>
    <scope>NUCLEOTIDE SEQUENCE [LARGE SCALE GENOMIC DNA]</scope>
    <source>
        <strain>ATCC 204508 / S288c</strain>
    </source>
</reference>
<reference key="2">
    <citation type="journal article" date="2014" name="G3 (Bethesda)">
        <title>The reference genome sequence of Saccharomyces cerevisiae: Then and now.</title>
        <authorList>
            <person name="Engel S.R."/>
            <person name="Dietrich F.S."/>
            <person name="Fisk D.G."/>
            <person name="Binkley G."/>
            <person name="Balakrishnan R."/>
            <person name="Costanzo M.C."/>
            <person name="Dwight S.S."/>
            <person name="Hitz B.C."/>
            <person name="Karra K."/>
            <person name="Nash R.S."/>
            <person name="Weng S."/>
            <person name="Wong E.D."/>
            <person name="Lloyd P."/>
            <person name="Skrzypek M.S."/>
            <person name="Miyasato S.R."/>
            <person name="Simison M."/>
            <person name="Cherry J.M."/>
        </authorList>
    </citation>
    <scope>GENOME REANNOTATION</scope>
    <source>
        <strain>ATCC 204508 / S288c</strain>
    </source>
</reference>
<reference key="3">
    <citation type="journal article" date="2002" name="Mol. Cell. Biol.">
        <title>Esc1, a nuclear periphery protein required for Sir4-based plasmid anchoring and partitioning.</title>
        <authorList>
            <person name="Andrulis E.D."/>
            <person name="Zappulla D.C."/>
            <person name="Ansari A."/>
            <person name="Perrod S."/>
            <person name="Laiosa C.V."/>
            <person name="Gartenberg M.R."/>
            <person name="Sternglanz R."/>
        </authorList>
    </citation>
    <scope>FUNCTION</scope>
    <scope>INTERACTION WITH SIR4</scope>
    <scope>SUBCELLULAR LOCATION</scope>
</reference>
<reference key="4">
    <citation type="journal article" date="2003" name="Nature">
        <title>Global analysis of protein localization in budding yeast.</title>
        <authorList>
            <person name="Huh W.-K."/>
            <person name="Falvo J.V."/>
            <person name="Gerke L.C."/>
            <person name="Carroll A.S."/>
            <person name="Howson R.W."/>
            <person name="Weissman J.S."/>
            <person name="O'Shea E.K."/>
        </authorList>
    </citation>
    <scope>SUBCELLULAR LOCATION [LARGE SCALE ANALYSIS]</scope>
</reference>
<reference key="5">
    <citation type="journal article" date="2004" name="Cell">
        <title>Sir-mediated repression can occur independently of chromosomal and subnuclear contexts.</title>
        <authorList>
            <person name="Gartenberg M.R."/>
            <person name="Neumann F.R."/>
            <person name="Laroche T."/>
            <person name="Blaszczyk M."/>
            <person name="Gasser S.M."/>
        </authorList>
    </citation>
    <scope>FUNCTION</scope>
</reference>
<reference key="6">
    <citation type="journal article" date="2004" name="EMBO J.">
        <title>Separation of silencing from perinuclear anchoring functions in yeast Ku80, Sir4 and Esc1 proteins.</title>
        <authorList>
            <person name="Taddei A."/>
            <person name="Hediger F."/>
            <person name="Neumann F.R."/>
            <person name="Bauer C."/>
            <person name="Gasser S.M."/>
        </authorList>
    </citation>
    <scope>FUNCTION</scope>
    <scope>INTERACTION WITH SIR4</scope>
    <scope>SUBCELLULAR LOCATION</scope>
</reference>
<reference key="7">
    <citation type="journal article" date="2007" name="J. Proteome Res.">
        <title>Large-scale phosphorylation analysis of alpha-factor-arrested Saccharomyces cerevisiae.</title>
        <authorList>
            <person name="Li X."/>
            <person name="Gerber S.A."/>
            <person name="Rudner A.D."/>
            <person name="Beausoleil S.A."/>
            <person name="Haas W."/>
            <person name="Villen J."/>
            <person name="Elias J.E."/>
            <person name="Gygi S.P."/>
        </authorList>
    </citation>
    <scope>PHOSPHORYLATION [LARGE SCALE ANALYSIS] AT SER-532; SER-911 AND SER-1326</scope>
    <scope>IDENTIFICATION BY MASS SPECTROMETRY [LARGE SCALE ANALYSIS]</scope>
    <source>
        <strain>ADR376</strain>
    </source>
</reference>
<reference key="8">
    <citation type="journal article" date="2007" name="Proc. Natl. Acad. Sci. U.S.A.">
        <title>Analysis of phosphorylation sites on proteins from Saccharomyces cerevisiae by electron transfer dissociation (ETD) mass spectrometry.</title>
        <authorList>
            <person name="Chi A."/>
            <person name="Huttenhower C."/>
            <person name="Geer L.Y."/>
            <person name="Coon J.J."/>
            <person name="Syka J.E.P."/>
            <person name="Bai D.L."/>
            <person name="Shabanowitz J."/>
            <person name="Burke D.J."/>
            <person name="Troyanskaya O.G."/>
            <person name="Hunt D.F."/>
        </authorList>
    </citation>
    <scope>IDENTIFICATION BY MASS SPECTROMETRY [LARGE SCALE ANALYSIS]</scope>
</reference>
<reference key="9">
    <citation type="journal article" date="2008" name="Mol. Cell. Proteomics">
        <title>A multidimensional chromatography technology for in-depth phosphoproteome analysis.</title>
        <authorList>
            <person name="Albuquerque C.P."/>
            <person name="Smolka M.B."/>
            <person name="Payne S.H."/>
            <person name="Bafna V."/>
            <person name="Eng J."/>
            <person name="Zhou H."/>
        </authorList>
    </citation>
    <scope>PHOSPHORYLATION [LARGE SCALE ANALYSIS] AT THR-500; SER-532; SER-579; SER-662; SER-865; SER-866; SER-888; SER-1166; SER-1254 AND SER-1326</scope>
    <scope>IDENTIFICATION BY MASS SPECTROMETRY [LARGE SCALE ANALYSIS]</scope>
</reference>
<reference key="10">
    <citation type="journal article" date="2009" name="Science">
        <title>Global analysis of Cdk1 substrate phosphorylation sites provides insights into evolution.</title>
        <authorList>
            <person name="Holt L.J."/>
            <person name="Tuch B.B."/>
            <person name="Villen J."/>
            <person name="Johnson A.D."/>
            <person name="Gygi S.P."/>
            <person name="Morgan D.O."/>
        </authorList>
    </citation>
    <scope>PHOSPHORYLATION [LARGE SCALE ANALYSIS] AT SER-532; SER-579; SER-583; SER-608; SER-865; SER-866; SER-888; SER-911; SER-937; SER-1092; SER-1096; SER-1098; SER-1176; SER-1178; SER-1214; SER-1254; SER-1290; SER-1326; SER-1332; SER-1403; SER-1409; SER-1450; SER-1454; SER-1539; SER-1590 AND SER-1591</scope>
    <scope>IDENTIFICATION BY MASS SPECTROMETRY [LARGE SCALE ANALYSIS]</scope>
</reference>
<reference key="11">
    <citation type="journal article" date="2012" name="Proc. Natl. Acad. Sci. U.S.A.">
        <title>N-terminal acetylome analyses and functional insights of the N-terminal acetyltransferase NatB.</title>
        <authorList>
            <person name="Van Damme P."/>
            <person name="Lasa M."/>
            <person name="Polevoda B."/>
            <person name="Gazquez C."/>
            <person name="Elosegui-Artola A."/>
            <person name="Kim D.S."/>
            <person name="De Juan-Pardo E."/>
            <person name="Demeyer K."/>
            <person name="Hole K."/>
            <person name="Larrea E."/>
            <person name="Timmerman E."/>
            <person name="Prieto J."/>
            <person name="Arnesen T."/>
            <person name="Sherman F."/>
            <person name="Gevaert K."/>
            <person name="Aldabe R."/>
        </authorList>
    </citation>
    <scope>IDENTIFICATION BY MASS SPECTROMETRY [LARGE SCALE ANALYSIS]</scope>
</reference>
<gene>
    <name type="primary">ESC1</name>
    <name type="ordered locus">YMR219W</name>
    <name type="ORF">YM8261.13</name>
    <name type="ORF">YM9959.01</name>
</gene>
<name>ESC1_YEAST</name>
<evidence type="ECO:0000256" key="1">
    <source>
        <dbReference type="SAM" id="MobiDB-lite"/>
    </source>
</evidence>
<evidence type="ECO:0000269" key="2">
    <source>
    </source>
</evidence>
<evidence type="ECO:0000269" key="3">
    <source>
    </source>
</evidence>
<evidence type="ECO:0000269" key="4">
    <source>
    </source>
</evidence>
<evidence type="ECO:0000269" key="5">
    <source>
    </source>
</evidence>
<evidence type="ECO:0007744" key="6">
    <source>
    </source>
</evidence>
<evidence type="ECO:0007744" key="7">
    <source>
    </source>
</evidence>
<evidence type="ECO:0007744" key="8">
    <source>
    </source>
</evidence>
<sequence>MSKKKETFTPRANKLKLTTPRRKLKILSSLLDADEDSKMKDQHGYSRVHNDKYRVAKPTQHSTLHESISSRRSSHIHNKSLHEDSARALSWVDSLINRGKSILTTLEKEDALFERSLEEERQRFQLHDSLMNKYTGNSKSHQRLIDLRKSQYGTDTSFQNNDEIPLDSFISSPLPDAEDESSSNIDSDKDEDLEGKQSLIKDFDLENDEYELSEEEKNSDGQSSPSIMILSDEEYAEEGALQDVSNDEYAEEEGQVERKNIGQEQANVENATQISSSDSSEGQNYSEGVEMELEDDIDVESDAEKDESQGAEGTEHSVDFSKYMQPRTDNTKIPVIEKYESDEHKVHQRYSEDGAFDFGSVNISVDDESEDEESQAESYSANAENVYHHNEHELDDKELIEDIESSDSESQSAQESEQGSEDDFEYKMKNEKSTSEETENTSESRDQGFAKDAYTKNKVEQQENDEEPEKDDIIRSSLDKNFHGNNNKSEYSENVLENETDPAIVERENQINDVEGYDVTGKSVESDLHEHSPDNLYDLAARAMLQFQQSRNSNCPQKEEQVSESYLGHSNGSNLSGRSLDESEEQIPLKDFTGENNNNLKTDRGDLSSSVEIEVEKVSEKKLDGSTEKELVPLSTDTTINNSSLGNEDSIYYSLDDADAISENLTDVPLMEIKTTPKYEVVISESVYSSTSYEDNTVAMPPQVEYTSPFMNDPFNSLNDDYEKKHDLLKSTLAALAPAFTKKDAEFVEAGVTKSCLTSTSGHTNIFHTSKETKQVSDLDESTENVTFENENTGDENKNQSKNFPGVANSTDKSTEDNTDEKYFSAINYTNVTGDSSCEDIIETASNVEENLRYCEKDMNEAEMSSGDECVKQNDDGSKTQISFSTDSPDNFQESNDNTEFSSTKYKVRNSDLEDDESLKKELTKAEVVDKLDEEESEDSYEQDYADPEPGNDEGSNENIVKGTKKDTLGIVEPENEKVNKVHEEETLFEANVSSSVNVQNKDMHTDVINQEAQANYEAGERKYYIQNTDTEEAHISIIERIDENAIGNNMEIPERSCVEKTHNEVLFERRATTIENTKALENNTNMHDQVSQACSDSDRDQDSTAEKNVEGSAKHNLDIRVSSSEIESVEPLKPESDRSNIFSSPIRVIGAVVKGVGKVVDVAESFVKKIDVMDSESDDNVDIGDYNQDIFNKSNSTDASVNMKSVSSKERDSDEDEAVILGGVTAEAHNDNGNNSRVINIDPTTNGAYEEDSEVFRQQVKDKENLHKSEEPLVEGLQSEQHFEKKDHSENEEEFDTIYGDITSANIHSNAPDDIKRQQLLKNLSDLENYSQRLIEDSRRGKNQEESDEVNTSRERDLTFEKSVNEKYAGAIEEDTFSELDISIQHPEHEEDLDLSNNQERSIEELNSEPEEAELYELEIEGPTETAASSKMNDDERQRGNIPSTDLPSDPPSDKEEVTDSYPYSNSENITAEKSAPTSPEVYEIFSDTPNEVPMEINDEIPATTLEKHDKTNVTSVLDDRSEHLSSHDVDNEPHDNSINIKVNEGEEPEHQAVDIPVKVEVKEEQEEMPSKSVLEEQKPSMELINDKSSPENNNDEETNREKDKTKAKKKSRKRNYNSRRRKRKITEGSSAASNTKRRRGHEPKSRGQNTHPSVDK</sequence>